<dbReference type="EMBL" id="U20344">
    <property type="protein sequence ID" value="AAC04892.1"/>
    <property type="molecule type" value="mRNA"/>
</dbReference>
<dbReference type="EMBL" id="U70662">
    <property type="protein sequence ID" value="AAC52939.1"/>
    <property type="status" value="ALT_INIT"/>
    <property type="molecule type" value="mRNA"/>
</dbReference>
<dbReference type="EMBL" id="AF117109">
    <property type="protein sequence ID" value="AAD17223.1"/>
    <property type="molecule type" value="Genomic_DNA"/>
</dbReference>
<dbReference type="EMBL" id="AY071827">
    <property type="protein sequence ID" value="AAL60058.1"/>
    <property type="molecule type" value="Genomic_DNA"/>
</dbReference>
<dbReference type="EMBL" id="AK141244">
    <property type="protein sequence ID" value="BAE24612.1"/>
    <property type="molecule type" value="mRNA"/>
</dbReference>
<dbReference type="EMBL" id="AK144942">
    <property type="protein sequence ID" value="BAE26147.1"/>
    <property type="molecule type" value="mRNA"/>
</dbReference>
<dbReference type="EMBL" id="AK155343">
    <property type="protein sequence ID" value="BAE33205.1"/>
    <property type="molecule type" value="mRNA"/>
</dbReference>
<dbReference type="EMBL" id="AL732494">
    <property type="status" value="NOT_ANNOTATED_CDS"/>
    <property type="molecule type" value="Genomic_DNA"/>
</dbReference>
<dbReference type="EMBL" id="CH466565">
    <property type="protein sequence ID" value="EDL02262.1"/>
    <property type="molecule type" value="Genomic_DNA"/>
</dbReference>
<dbReference type="EMBL" id="BC010301">
    <property type="protein sequence ID" value="AAH10301.2"/>
    <property type="status" value="ALT_INIT"/>
    <property type="molecule type" value="mRNA"/>
</dbReference>
<dbReference type="CCDS" id="CCDS18195.2"/>
<dbReference type="RefSeq" id="NP_034767.2">
    <property type="nucleotide sequence ID" value="NM_010637.3"/>
</dbReference>
<dbReference type="PDB" id="2WBS">
    <property type="method" value="X-ray"/>
    <property type="resolution" value="1.70 A"/>
    <property type="chains" value="A=395-483"/>
</dbReference>
<dbReference type="PDB" id="2WBU">
    <property type="method" value="X-ray"/>
    <property type="resolution" value="2.50 A"/>
    <property type="chains" value="A=396-483"/>
</dbReference>
<dbReference type="PDB" id="4M9E">
    <property type="method" value="X-ray"/>
    <property type="resolution" value="1.85 A"/>
    <property type="chains" value="A=396-483"/>
</dbReference>
<dbReference type="PDB" id="5KE6">
    <property type="method" value="X-ray"/>
    <property type="resolution" value="1.99 A"/>
    <property type="chains" value="A=396-483"/>
</dbReference>
<dbReference type="PDB" id="5KE7">
    <property type="method" value="X-ray"/>
    <property type="resolution" value="2.06 A"/>
    <property type="chains" value="A=396-483"/>
</dbReference>
<dbReference type="PDB" id="5KE8">
    <property type="method" value="X-ray"/>
    <property type="resolution" value="2.45 A"/>
    <property type="chains" value="A=396-483"/>
</dbReference>
<dbReference type="PDB" id="5KE9">
    <property type="method" value="X-ray"/>
    <property type="resolution" value="2.34 A"/>
    <property type="chains" value="A=396-483"/>
</dbReference>
<dbReference type="PDB" id="5KEA">
    <property type="method" value="X-ray"/>
    <property type="resolution" value="2.46 A"/>
    <property type="chains" value="A=396-483"/>
</dbReference>
<dbReference type="PDB" id="5KEB">
    <property type="method" value="X-ray"/>
    <property type="resolution" value="2.45 A"/>
    <property type="chains" value="A=396-483"/>
</dbReference>
<dbReference type="PDBsum" id="2WBS"/>
<dbReference type="PDBsum" id="2WBU"/>
<dbReference type="PDBsum" id="4M9E"/>
<dbReference type="PDBsum" id="5KE6"/>
<dbReference type="PDBsum" id="5KE7"/>
<dbReference type="PDBsum" id="5KE8"/>
<dbReference type="PDBsum" id="5KE9"/>
<dbReference type="PDBsum" id="5KEA"/>
<dbReference type="PDBsum" id="5KEB"/>
<dbReference type="SMR" id="Q60793"/>
<dbReference type="BioGRID" id="200966">
    <property type="interactions" value="16"/>
</dbReference>
<dbReference type="DIP" id="DIP-59920N"/>
<dbReference type="ELM" id="Q60793"/>
<dbReference type="FunCoup" id="Q60793">
    <property type="interactions" value="555"/>
</dbReference>
<dbReference type="IntAct" id="Q60793">
    <property type="interactions" value="16"/>
</dbReference>
<dbReference type="MINT" id="Q60793"/>
<dbReference type="STRING" id="10090.ENSMUSP00000103245"/>
<dbReference type="GlyGen" id="Q60793">
    <property type="glycosylation" value="7 sites, 1 O-linked glycan (6 sites)"/>
</dbReference>
<dbReference type="iPTMnet" id="Q60793"/>
<dbReference type="PhosphoSitePlus" id="Q60793"/>
<dbReference type="PaxDb" id="10090-ENSMUSP00000103245"/>
<dbReference type="ProteomicsDB" id="269224"/>
<dbReference type="Pumba" id="Q60793"/>
<dbReference type="Antibodypedia" id="14888">
    <property type="antibodies" value="925 antibodies from 44 providers"/>
</dbReference>
<dbReference type="DNASU" id="16600"/>
<dbReference type="Ensembl" id="ENSMUST00000107619.3">
    <property type="protein sequence ID" value="ENSMUSP00000103245.3"/>
    <property type="gene ID" value="ENSMUSG00000003032.9"/>
</dbReference>
<dbReference type="GeneID" id="16600"/>
<dbReference type="KEGG" id="mmu:16600"/>
<dbReference type="UCSC" id="uc008sxk.2">
    <property type="organism name" value="mouse"/>
</dbReference>
<dbReference type="AGR" id="MGI:1342287"/>
<dbReference type="CTD" id="9314"/>
<dbReference type="MGI" id="MGI:1342287">
    <property type="gene designation" value="Klf4"/>
</dbReference>
<dbReference type="VEuPathDB" id="HostDB:ENSMUSG00000003032"/>
<dbReference type="eggNOG" id="KOG1721">
    <property type="taxonomic scope" value="Eukaryota"/>
</dbReference>
<dbReference type="GeneTree" id="ENSGT00940000156229"/>
<dbReference type="HOGENOM" id="CLU_002678_33_1_1"/>
<dbReference type="InParanoid" id="Q60793"/>
<dbReference type="OMA" id="LSTRDCH"/>
<dbReference type="OrthoDB" id="4748970at2759"/>
<dbReference type="PhylomeDB" id="Q60793"/>
<dbReference type="TreeFam" id="TF350556"/>
<dbReference type="BioGRID-ORCS" id="16600">
    <property type="hits" value="2 hits in 80 CRISPR screens"/>
</dbReference>
<dbReference type="ChiTaRS" id="Klf4">
    <property type="organism name" value="mouse"/>
</dbReference>
<dbReference type="EvolutionaryTrace" id="Q60793"/>
<dbReference type="PRO" id="PR:Q60793"/>
<dbReference type="Proteomes" id="UP000000589">
    <property type="component" value="Chromosome 4"/>
</dbReference>
<dbReference type="RNAct" id="Q60793">
    <property type="molecule type" value="protein"/>
</dbReference>
<dbReference type="Bgee" id="ENSMUSG00000003032">
    <property type="expression patterns" value="Expressed in epithelium of stomach and 247 other cell types or tissues"/>
</dbReference>
<dbReference type="ExpressionAtlas" id="Q60793">
    <property type="expression patterns" value="baseline and differential"/>
</dbReference>
<dbReference type="GO" id="GO:0005737">
    <property type="term" value="C:cytoplasm"/>
    <property type="evidence" value="ECO:0000314"/>
    <property type="project" value="UniProtKB"/>
</dbReference>
<dbReference type="GO" id="GO:0005829">
    <property type="term" value="C:cytosol"/>
    <property type="evidence" value="ECO:0007669"/>
    <property type="project" value="Ensembl"/>
</dbReference>
<dbReference type="GO" id="GO:0000791">
    <property type="term" value="C:euchromatin"/>
    <property type="evidence" value="ECO:0000314"/>
    <property type="project" value="BHF-UCL"/>
</dbReference>
<dbReference type="GO" id="GO:0015630">
    <property type="term" value="C:microtubule cytoskeleton"/>
    <property type="evidence" value="ECO:0007669"/>
    <property type="project" value="Ensembl"/>
</dbReference>
<dbReference type="GO" id="GO:0005654">
    <property type="term" value="C:nucleoplasm"/>
    <property type="evidence" value="ECO:0000304"/>
    <property type="project" value="Reactome"/>
</dbReference>
<dbReference type="GO" id="GO:0005634">
    <property type="term" value="C:nucleus"/>
    <property type="evidence" value="ECO:0000314"/>
    <property type="project" value="UniProtKB"/>
</dbReference>
<dbReference type="GO" id="GO:0005667">
    <property type="term" value="C:transcription regulator complex"/>
    <property type="evidence" value="ECO:0000314"/>
    <property type="project" value="BHF-UCL"/>
</dbReference>
<dbReference type="GO" id="GO:0008013">
    <property type="term" value="F:beta-catenin binding"/>
    <property type="evidence" value="ECO:0000353"/>
    <property type="project" value="BHF-UCL"/>
</dbReference>
<dbReference type="GO" id="GO:0031490">
    <property type="term" value="F:chromatin DNA binding"/>
    <property type="evidence" value="ECO:0000314"/>
    <property type="project" value="MGI"/>
</dbReference>
<dbReference type="GO" id="GO:0003677">
    <property type="term" value="F:DNA binding"/>
    <property type="evidence" value="ECO:0000250"/>
    <property type="project" value="MGI"/>
</dbReference>
<dbReference type="GO" id="GO:0001228">
    <property type="term" value="F:DNA-binding transcription activator activity, RNA polymerase II-specific"/>
    <property type="evidence" value="ECO:0000314"/>
    <property type="project" value="MGI"/>
</dbReference>
<dbReference type="GO" id="GO:0003700">
    <property type="term" value="F:DNA-binding transcription factor activity"/>
    <property type="evidence" value="ECO:0000314"/>
    <property type="project" value="MGI"/>
</dbReference>
<dbReference type="GO" id="GO:0000981">
    <property type="term" value="F:DNA-binding transcription factor activity, RNA polymerase II-specific"/>
    <property type="evidence" value="ECO:0000314"/>
    <property type="project" value="CACAO"/>
</dbReference>
<dbReference type="GO" id="GO:0042826">
    <property type="term" value="F:histone deacetylase binding"/>
    <property type="evidence" value="ECO:0007669"/>
    <property type="project" value="Ensembl"/>
</dbReference>
<dbReference type="GO" id="GO:0106222">
    <property type="term" value="F:lncRNA binding"/>
    <property type="evidence" value="ECO:0000314"/>
    <property type="project" value="MGI"/>
</dbReference>
<dbReference type="GO" id="GO:0035014">
    <property type="term" value="F:phosphatidylinositol 3-kinase regulator activity"/>
    <property type="evidence" value="ECO:0007669"/>
    <property type="project" value="Ensembl"/>
</dbReference>
<dbReference type="GO" id="GO:1990841">
    <property type="term" value="F:promoter-specific chromatin binding"/>
    <property type="evidence" value="ECO:0000250"/>
    <property type="project" value="UniProtKB"/>
</dbReference>
<dbReference type="GO" id="GO:0000978">
    <property type="term" value="F:RNA polymerase II cis-regulatory region sequence-specific DNA binding"/>
    <property type="evidence" value="ECO:0000314"/>
    <property type="project" value="BHF-UCL"/>
</dbReference>
<dbReference type="GO" id="GO:0001010">
    <property type="term" value="F:RNA polymerase II sequence-specific DNA-binding transcription factor recruiting activity"/>
    <property type="evidence" value="ECO:0000314"/>
    <property type="project" value="BHF-UCL"/>
</dbReference>
<dbReference type="GO" id="GO:0061629">
    <property type="term" value="F:RNA polymerase II-specific DNA-binding transcription factor binding"/>
    <property type="evidence" value="ECO:0000353"/>
    <property type="project" value="BHF-UCL"/>
</dbReference>
<dbReference type="GO" id="GO:0043565">
    <property type="term" value="F:sequence-specific DNA binding"/>
    <property type="evidence" value="ECO:0000314"/>
    <property type="project" value="MGI"/>
</dbReference>
<dbReference type="GO" id="GO:0000976">
    <property type="term" value="F:transcription cis-regulatory region binding"/>
    <property type="evidence" value="ECO:0000314"/>
    <property type="project" value="UniProtKB"/>
</dbReference>
<dbReference type="GO" id="GO:0001221">
    <property type="term" value="F:transcription coregulator binding"/>
    <property type="evidence" value="ECO:0007669"/>
    <property type="project" value="Ensembl"/>
</dbReference>
<dbReference type="GO" id="GO:0008270">
    <property type="term" value="F:zinc ion binding"/>
    <property type="evidence" value="ECO:0007669"/>
    <property type="project" value="UniProtKB-KW"/>
</dbReference>
<dbReference type="GO" id="GO:0060070">
    <property type="term" value="P:canonical Wnt signaling pathway"/>
    <property type="evidence" value="ECO:0000315"/>
    <property type="project" value="BHF-UCL"/>
</dbReference>
<dbReference type="GO" id="GO:0071409">
    <property type="term" value="P:cellular response to cycloheximide"/>
    <property type="evidence" value="ECO:0007669"/>
    <property type="project" value="Ensembl"/>
</dbReference>
<dbReference type="GO" id="GO:0071363">
    <property type="term" value="P:cellular response to growth factor stimulus"/>
    <property type="evidence" value="ECO:0007669"/>
    <property type="project" value="Ensembl"/>
</dbReference>
<dbReference type="GO" id="GO:0070301">
    <property type="term" value="P:cellular response to hydrogen peroxide"/>
    <property type="evidence" value="ECO:0007669"/>
    <property type="project" value="Ensembl"/>
</dbReference>
<dbReference type="GO" id="GO:0071499">
    <property type="term" value="P:cellular response to laminar fluid shear stress"/>
    <property type="evidence" value="ECO:0007669"/>
    <property type="project" value="Ensembl"/>
</dbReference>
<dbReference type="GO" id="GO:1990830">
    <property type="term" value="P:cellular response to leukemia inhibitory factor"/>
    <property type="evidence" value="ECO:0000270"/>
    <property type="project" value="MGI"/>
</dbReference>
<dbReference type="GO" id="GO:1901653">
    <property type="term" value="P:cellular response to peptide"/>
    <property type="evidence" value="ECO:0007669"/>
    <property type="project" value="Ensembl"/>
</dbReference>
<dbReference type="GO" id="GO:0071300">
    <property type="term" value="P:cellular response to retinoic acid"/>
    <property type="evidence" value="ECO:0007669"/>
    <property type="project" value="Ensembl"/>
</dbReference>
<dbReference type="GO" id="GO:0002357">
    <property type="term" value="P:defense response to tumor cell"/>
    <property type="evidence" value="ECO:0007669"/>
    <property type="project" value="Ensembl"/>
</dbReference>
<dbReference type="GO" id="GO:0006351">
    <property type="term" value="P:DNA-templated transcription"/>
    <property type="evidence" value="ECO:0000315"/>
    <property type="project" value="CACAO"/>
</dbReference>
<dbReference type="GO" id="GO:0009913">
    <property type="term" value="P:epidermal cell differentiation"/>
    <property type="evidence" value="ECO:0000315"/>
    <property type="project" value="MGI"/>
</dbReference>
<dbReference type="GO" id="GO:0008544">
    <property type="term" value="P:epidermis development"/>
    <property type="evidence" value="ECO:0000315"/>
    <property type="project" value="MGI"/>
</dbReference>
<dbReference type="GO" id="GO:0048730">
    <property type="term" value="P:epidermis morphogenesis"/>
    <property type="evidence" value="ECO:0000315"/>
    <property type="project" value="MGI"/>
</dbReference>
<dbReference type="GO" id="GO:0030855">
    <property type="term" value="P:epithelial cell differentiation"/>
    <property type="evidence" value="ECO:0000315"/>
    <property type="project" value="MGI"/>
</dbReference>
<dbReference type="GO" id="GO:0061436">
    <property type="term" value="P:establishment of skin barrier"/>
    <property type="evidence" value="ECO:0000315"/>
    <property type="project" value="MGI"/>
</dbReference>
<dbReference type="GO" id="GO:0045444">
    <property type="term" value="P:fat cell differentiation"/>
    <property type="evidence" value="ECO:0000315"/>
    <property type="project" value="BHF-UCL"/>
</dbReference>
<dbReference type="GO" id="GO:0010467">
    <property type="term" value="P:gene expression"/>
    <property type="evidence" value="ECO:0000315"/>
    <property type="project" value="MGI"/>
</dbReference>
<dbReference type="GO" id="GO:0016525">
    <property type="term" value="P:negative regulation of angiogenesis"/>
    <property type="evidence" value="ECO:0007669"/>
    <property type="project" value="Ensembl"/>
</dbReference>
<dbReference type="GO" id="GO:0043124">
    <property type="term" value="P:negative regulation of canonical NF-kappaB signal transduction"/>
    <property type="evidence" value="ECO:0007669"/>
    <property type="project" value="Ensembl"/>
</dbReference>
<dbReference type="GO" id="GO:0030336">
    <property type="term" value="P:negative regulation of cell migration"/>
    <property type="evidence" value="ECO:0000315"/>
    <property type="project" value="CACAO"/>
</dbReference>
<dbReference type="GO" id="GO:0090051">
    <property type="term" value="P:negative regulation of cell migration involved in sprouting angiogenesis"/>
    <property type="evidence" value="ECO:0007669"/>
    <property type="project" value="Ensembl"/>
</dbReference>
<dbReference type="GO" id="GO:0008285">
    <property type="term" value="P:negative regulation of cell population proliferation"/>
    <property type="evidence" value="ECO:0000314"/>
    <property type="project" value="MGI"/>
</dbReference>
<dbReference type="GO" id="GO:2000342">
    <property type="term" value="P:negative regulation of chemokine (C-X-C motif) ligand 2 production"/>
    <property type="evidence" value="ECO:0007669"/>
    <property type="project" value="Ensembl"/>
</dbReference>
<dbReference type="GO" id="GO:0045892">
    <property type="term" value="P:negative regulation of DNA-templated transcription"/>
    <property type="evidence" value="ECO:0000250"/>
    <property type="project" value="UniProtKB"/>
</dbReference>
<dbReference type="GO" id="GO:0070373">
    <property type="term" value="P:negative regulation of ERK1 and ERK2 cascade"/>
    <property type="evidence" value="ECO:0007669"/>
    <property type="project" value="Ensembl"/>
</dbReference>
<dbReference type="GO" id="GO:2001240">
    <property type="term" value="P:negative regulation of extrinsic apoptotic signaling pathway in absence of ligand"/>
    <property type="evidence" value="ECO:0007669"/>
    <property type="project" value="Ensembl"/>
</dbReference>
<dbReference type="GO" id="GO:2000134">
    <property type="term" value="P:negative regulation of G1/S transition of mitotic cell cycle"/>
    <property type="evidence" value="ECO:0007669"/>
    <property type="project" value="Ensembl"/>
</dbReference>
<dbReference type="GO" id="GO:0034115">
    <property type="term" value="P:negative regulation of heterotypic cell-cell adhesion"/>
    <property type="evidence" value="ECO:0007669"/>
    <property type="project" value="Ensembl"/>
</dbReference>
<dbReference type="GO" id="GO:0032717">
    <property type="term" value="P:negative regulation of interleukin-8 production"/>
    <property type="evidence" value="ECO:0007669"/>
    <property type="project" value="Ensembl"/>
</dbReference>
<dbReference type="GO" id="GO:1904998">
    <property type="term" value="P:negative regulation of leukocyte adhesion to arterial endothelial cell"/>
    <property type="evidence" value="ECO:0007669"/>
    <property type="project" value="Ensembl"/>
</dbReference>
<dbReference type="GO" id="GO:0014740">
    <property type="term" value="P:negative regulation of muscle hyperplasia"/>
    <property type="evidence" value="ECO:0007669"/>
    <property type="project" value="Ensembl"/>
</dbReference>
<dbReference type="GO" id="GO:0051898">
    <property type="term" value="P:negative regulation of phosphatidylinositol 3-kinase/protein kinase B signal transduction"/>
    <property type="evidence" value="ECO:0007669"/>
    <property type="project" value="Ensembl"/>
</dbReference>
<dbReference type="GO" id="GO:0060761">
    <property type="term" value="P:negative regulation of response to cytokine stimulus"/>
    <property type="evidence" value="ECO:0007669"/>
    <property type="project" value="Ensembl"/>
</dbReference>
<dbReference type="GO" id="GO:0048662">
    <property type="term" value="P:negative regulation of smooth muscle cell proliferation"/>
    <property type="evidence" value="ECO:0007669"/>
    <property type="project" value="Ensembl"/>
</dbReference>
<dbReference type="GO" id="GO:0000122">
    <property type="term" value="P:negative regulation of transcription by RNA polymerase II"/>
    <property type="evidence" value="ECO:0007669"/>
    <property type="project" value="Ensembl"/>
</dbReference>
<dbReference type="GO" id="GO:0045893">
    <property type="term" value="P:positive regulation of DNA-templated transcription"/>
    <property type="evidence" value="ECO:0000314"/>
    <property type="project" value="UniProtKB"/>
</dbReference>
<dbReference type="GO" id="GO:0010628">
    <property type="term" value="P:positive regulation of gene expression"/>
    <property type="evidence" value="ECO:0007669"/>
    <property type="project" value="Ensembl"/>
</dbReference>
<dbReference type="GO" id="GO:0046985">
    <property type="term" value="P:positive regulation of hemoglobin biosynthetic process"/>
    <property type="evidence" value="ECO:0007669"/>
    <property type="project" value="Ensembl"/>
</dbReference>
<dbReference type="GO" id="GO:1902895">
    <property type="term" value="P:positive regulation of miRNA transcription"/>
    <property type="evidence" value="ECO:0007669"/>
    <property type="project" value="Ensembl"/>
</dbReference>
<dbReference type="GO" id="GO:0045429">
    <property type="term" value="P:positive regulation of nitric oxide biosynthetic process"/>
    <property type="evidence" value="ECO:0007669"/>
    <property type="project" value="Ensembl"/>
</dbReference>
<dbReference type="GO" id="GO:1903672">
    <property type="term" value="P:positive regulation of sprouting angiogenesis"/>
    <property type="evidence" value="ECO:0007669"/>
    <property type="project" value="Ensembl"/>
</dbReference>
<dbReference type="GO" id="GO:0032206">
    <property type="term" value="P:positive regulation of telomere maintenance"/>
    <property type="evidence" value="ECO:0007669"/>
    <property type="project" value="Ensembl"/>
</dbReference>
<dbReference type="GO" id="GO:0045944">
    <property type="term" value="P:positive regulation of transcription by RNA polymerase II"/>
    <property type="evidence" value="ECO:0000314"/>
    <property type="project" value="CACAO"/>
</dbReference>
<dbReference type="GO" id="GO:0031077">
    <property type="term" value="P:post-embryonic camera-type eye development"/>
    <property type="evidence" value="ECO:0000315"/>
    <property type="project" value="MGI"/>
</dbReference>
<dbReference type="GO" id="GO:0035166">
    <property type="term" value="P:post-embryonic hemopoiesis"/>
    <property type="evidence" value="ECO:0007669"/>
    <property type="project" value="Ensembl"/>
</dbReference>
<dbReference type="GO" id="GO:0048679">
    <property type="term" value="P:regulation of axon regeneration"/>
    <property type="evidence" value="ECO:0000315"/>
    <property type="project" value="MGI"/>
</dbReference>
<dbReference type="GO" id="GO:0120222">
    <property type="term" value="P:regulation of blastocyst development"/>
    <property type="evidence" value="ECO:0000315"/>
    <property type="project" value="MGI"/>
</dbReference>
<dbReference type="GO" id="GO:0045595">
    <property type="term" value="P:regulation of cell differentiation"/>
    <property type="evidence" value="ECO:0000314"/>
    <property type="project" value="UniProtKB"/>
</dbReference>
<dbReference type="GO" id="GO:0042127">
    <property type="term" value="P:regulation of cell population proliferation"/>
    <property type="evidence" value="ECO:0000316"/>
    <property type="project" value="MGI"/>
</dbReference>
<dbReference type="GO" id="GO:0006357">
    <property type="term" value="P:regulation of transcription by RNA polymerase II"/>
    <property type="evidence" value="ECO:0000314"/>
    <property type="project" value="MGI"/>
</dbReference>
<dbReference type="GO" id="GO:0032526">
    <property type="term" value="P:response to retinoic acid"/>
    <property type="evidence" value="ECO:0000314"/>
    <property type="project" value="MGI"/>
</dbReference>
<dbReference type="GO" id="GO:0035019">
    <property type="term" value="P:somatic stem cell population maintenance"/>
    <property type="evidence" value="ECO:0000314"/>
    <property type="project" value="MGI"/>
</dbReference>
<dbReference type="GO" id="GO:0019827">
    <property type="term" value="P:stem cell population maintenance"/>
    <property type="evidence" value="ECO:0000314"/>
    <property type="project" value="UniProtKB"/>
</dbReference>
<dbReference type="GO" id="GO:0006366">
    <property type="term" value="P:transcription by RNA polymerase II"/>
    <property type="evidence" value="ECO:0000315"/>
    <property type="project" value="MGI"/>
</dbReference>
<dbReference type="CDD" id="cd21582">
    <property type="entry name" value="KLF4_N"/>
    <property type="match status" value="1"/>
</dbReference>
<dbReference type="FunFam" id="3.30.160.60:FF:002123">
    <property type="entry name" value="C2H2 transcription factor, putative"/>
    <property type="match status" value="1"/>
</dbReference>
<dbReference type="FunFam" id="3.30.160.60:FF:000018">
    <property type="entry name" value="Krueppel-like factor 15"/>
    <property type="match status" value="1"/>
</dbReference>
<dbReference type="FunFam" id="3.30.160.60:FF:000237">
    <property type="entry name" value="Krueppel-like factor 2"/>
    <property type="match status" value="1"/>
</dbReference>
<dbReference type="Gene3D" id="3.30.160.60">
    <property type="entry name" value="Classic Zinc Finger"/>
    <property type="match status" value="3"/>
</dbReference>
<dbReference type="InterPro" id="IPR036236">
    <property type="entry name" value="Znf_C2H2_sf"/>
</dbReference>
<dbReference type="InterPro" id="IPR013087">
    <property type="entry name" value="Znf_C2H2_type"/>
</dbReference>
<dbReference type="PANTHER" id="PTHR23235:SF117">
    <property type="entry name" value="KRUEPPEL-LIKE FACTOR 4"/>
    <property type="match status" value="1"/>
</dbReference>
<dbReference type="PANTHER" id="PTHR23235">
    <property type="entry name" value="KRUEPPEL-LIKE TRANSCRIPTION FACTOR"/>
    <property type="match status" value="1"/>
</dbReference>
<dbReference type="Pfam" id="PF00096">
    <property type="entry name" value="zf-C2H2"/>
    <property type="match status" value="3"/>
</dbReference>
<dbReference type="SMART" id="SM00355">
    <property type="entry name" value="ZnF_C2H2"/>
    <property type="match status" value="3"/>
</dbReference>
<dbReference type="SUPFAM" id="SSF57667">
    <property type="entry name" value="beta-beta-alpha zinc fingers"/>
    <property type="match status" value="2"/>
</dbReference>
<dbReference type="PROSITE" id="PS00028">
    <property type="entry name" value="ZINC_FINGER_C2H2_1"/>
    <property type="match status" value="3"/>
</dbReference>
<dbReference type="PROSITE" id="PS50157">
    <property type="entry name" value="ZINC_FINGER_C2H2_2"/>
    <property type="match status" value="3"/>
</dbReference>
<evidence type="ECO:0000250" key="1"/>
<evidence type="ECO:0000250" key="2">
    <source>
        <dbReference type="UniProtKB" id="O43474"/>
    </source>
</evidence>
<evidence type="ECO:0000255" key="3">
    <source>
        <dbReference type="PROSITE-ProRule" id="PRU00042"/>
    </source>
</evidence>
<evidence type="ECO:0000256" key="4">
    <source>
        <dbReference type="SAM" id="MobiDB-lite"/>
    </source>
</evidence>
<evidence type="ECO:0000269" key="5">
    <source>
    </source>
</evidence>
<evidence type="ECO:0000269" key="6">
    <source>
    </source>
</evidence>
<evidence type="ECO:0000269" key="7">
    <source>
    </source>
</evidence>
<evidence type="ECO:0000269" key="8">
    <source>
    </source>
</evidence>
<evidence type="ECO:0000269" key="9">
    <source>
    </source>
</evidence>
<evidence type="ECO:0000269" key="10">
    <source>
    </source>
</evidence>
<evidence type="ECO:0000269" key="11">
    <source>
    </source>
</evidence>
<evidence type="ECO:0000269" key="12">
    <source>
    </source>
</evidence>
<evidence type="ECO:0000269" key="13">
    <source>
    </source>
</evidence>
<evidence type="ECO:0000269" key="14">
    <source>
    </source>
</evidence>
<evidence type="ECO:0000269" key="15">
    <source>
    </source>
</evidence>
<evidence type="ECO:0000269" key="16">
    <source>
    </source>
</evidence>
<evidence type="ECO:0000305" key="17"/>
<evidence type="ECO:0007829" key="18">
    <source>
        <dbReference type="PDB" id="2WBS"/>
    </source>
</evidence>
<comment type="function">
    <text evidence="1 5 6 8 10 11 12 13 15">Transcription factor; can act both as activator and as repressor. Binds the 5'-CACCC-3' core sequence (PubMed:10431239, PubMed:10556311, PubMed:15358627, PubMed:16954384, PubMed:17060454, PubMed:19816951, PubMed:20071344, PubMed:29593216). Binds to the promoter region of its own gene and can activate its own transcription (PubMed:10431239, PubMed:10556311, PubMed:15358627, PubMed:16954384, PubMed:17060454, PubMed:19816951, PubMed:20071344, PubMed:29593216). Regulates the expression of key transcription factors during embryonic development (PubMed:10431239, PubMed:10556311, PubMed:15358627, PubMed:16954384, PubMed:17060454, PubMed:19816951, PubMed:20071344, PubMed:29593216). Plays an important role in maintaining embryonic stem cells, and in preventing their differentiation (PubMed:10431239, PubMed:10556311, PubMed:15358627, PubMed:16954384, PubMed:17060454, PubMed:19816951, PubMed:20071344, PubMed:29593216). Required for establishing the barrier function of the skin and for postnatal maturation and maintenance of the ocular surface. Involved in the differentiation of epithelial cells and may also function in skeletal and kidney development. Contributes to the down-regulation of p53/TP53 transcription (By similarity).</text>
</comment>
<comment type="subunit">
    <text evidence="2 12 14 15 16">Interacts with MUC1 (via the C-terminal domain) (By similarity). Interacts with POU5F1/OCT4 and SOX2 (PubMed:19816951). Interacts with MEIS2 isoform MeisD and PBX1 isoform PBX1a (By similarity). Interacts with ZNF296 (PubMed:24161396). Interacts with GLIS1 (By similarity). Interacts with BTRC; this interaction leads to KLF4 ubiquitination and subsequent degradation (PubMed:29593216). Interacts with IPO7; the interaction facilitates nuclear translocation of KLF4 in dental papilla cells (PubMed:35922041).</text>
</comment>
<comment type="interaction">
    <interactant intactId="EBI-3043905">
        <id>Q60793</id>
    </interactant>
    <interactant intactId="EBI-397682">
        <id>Q63844</id>
        <label>Mapk3</label>
    </interactant>
    <organismsDiffer>false</organismsDiffer>
    <experiments>3</experiments>
</comment>
<comment type="interaction">
    <interactant intactId="EBI-3043905">
        <id>Q60793</id>
    </interactant>
    <interactant intactId="EBI-307461">
        <id>Q9Y297</id>
        <label>BTRC</label>
    </interactant>
    <organismsDiffer>true</organismsDiffer>
    <experiments>3</experiments>
</comment>
<comment type="interaction">
    <interactant intactId="EBI-3043905">
        <id>Q60793</id>
    </interactant>
    <interactant intactId="EBI-355189">
        <id>Q9UKB1</id>
        <label>FBXW11</label>
    </interactant>
    <organismsDiffer>true</organismsDiffer>
    <experiments>4</experiments>
</comment>
<comment type="interaction">
    <interactant intactId="EBI-3043905">
        <id>Q60793</id>
    </interactant>
    <interactant intactId="EBI-73995">
        <id>P27361</id>
        <label>MAPK3</label>
    </interactant>
    <organismsDiffer>true</organismsDiffer>
    <experiments>2</experiments>
</comment>
<comment type="interaction">
    <interactant intactId="EBI-3043905">
        <id>Q60793</id>
    </interactant>
    <interactant intactId="EBI-358174">
        <id>O95793</id>
        <label>STAU1</label>
    </interactant>
    <organismsDiffer>true</organismsDiffer>
    <experiments>7</experiments>
</comment>
<comment type="subcellular location">
    <subcellularLocation>
        <location evidence="5 14 16">Nucleus</location>
    </subcellularLocation>
    <subcellularLocation>
        <location evidence="16">Cytoplasm</location>
    </subcellularLocation>
</comment>
<comment type="tissue specificity">
    <text>Highest expression in the colon. Lower levels in testis, lung and small intestine.</text>
</comment>
<comment type="induction">
    <text evidence="7">By interferon-gamma in Stat1-dependent manner.</text>
</comment>
<comment type="domain">
    <text evidence="2">The 9aaTAD motif is a transactivation domain present in a large number of yeast and animal transcription factors.</text>
</comment>
<comment type="PTM">
    <text evidence="15">Ubiquitinated. 'Lys-48'-linked ubiquitinated and targeted for proteasomal degradation by the SCF(BTRC) E3 ubiquitin-protein ligase complex, thereby negatively regulating cell pluripotency maintenance and embryogenesis.</text>
</comment>
<comment type="PTM">
    <text evidence="15">Polyglutamylated by TTLL1 and TTLL4 at Glu-381, which inhibits KLF4 binding with E3 ligase component BTRC, thereby impeding ubiquitination (PubMed:29593216). Deglutamylated by CCP1 and CCP6; deglutamylation promotes KLF4 ubiquitination (PubMed:29593216). KLF4 glutamylation state plays a critical role in the regulation of its function in cell reprogramming, pluripotency maintenance and embryogenesis (PubMed:29593216).</text>
</comment>
<comment type="disruption phenotype">
    <text evidence="5 11">Death shortly after birth due to loss of epidermal barrier function resulting from perturbation of late-stage epidermal differentiation structures including the cornified envelope. When selectively deleted in the surface ectoderm-derived structures of the eye, embryos develop normally and adults are viable and fertile but mutants display down-regulation of Krt12 and Aqp5 and multiple ocular defects including corneal epithelial fragility, stromal edema, defective lens and loss of conjunctival goblet cells.</text>
</comment>
<comment type="biotechnology">
    <text evidence="9 12">POU5F1/OCT4, SOX2, MYC/c-Myc and KLF4 are the four Yamanaka factors. When combined, these factors are sufficient to reprogram differentiated cells to an embryonic-like state designated iPS (induced pluripotent stem) cells. iPS cells exhibit the morphology and growth properties of ES cells and express ES cell marker genes.</text>
</comment>
<comment type="similarity">
    <text evidence="17">Belongs to the krueppel C2H2-type zinc-finger protein family.</text>
</comment>
<comment type="sequence caution" evidence="17">
    <conflict type="erroneous initiation">
        <sequence resource="EMBL-CDS" id="AAC52939"/>
    </conflict>
    <text>Truncated N-terminus.</text>
</comment>
<comment type="sequence caution" evidence="17">
    <conflict type="erroneous initiation">
        <sequence resource="EMBL-CDS" id="AAH10301"/>
    </conflict>
    <text>Truncated N-terminus.</text>
</comment>
<accession>Q60793</accession>
<accession>P70421</accession>
<accession>Q3U2D6</accession>
<accession>Q3URS6</accession>
<accession>Q78K30</accession>
<accession>Q9R255</accession>
<feature type="chain" id="PRO_0000047168" description="Krueppel-like factor 4">
    <location>
        <begin position="1"/>
        <end position="483"/>
    </location>
</feature>
<feature type="zinc finger region" description="C2H2-type 1" evidence="3">
    <location>
        <begin position="400"/>
        <end position="424"/>
    </location>
</feature>
<feature type="zinc finger region" description="C2H2-type 2" evidence="3">
    <location>
        <begin position="430"/>
        <end position="454"/>
    </location>
</feature>
<feature type="zinc finger region" description="C2H2-type 3" evidence="3">
    <location>
        <begin position="460"/>
        <end position="482"/>
    </location>
</feature>
<feature type="region of interest" description="Disordered" evidence="4">
    <location>
        <begin position="22"/>
        <end position="42"/>
    </location>
</feature>
<feature type="region of interest" description="Disordered" evidence="4">
    <location>
        <begin position="294"/>
        <end position="395"/>
    </location>
</feature>
<feature type="region of interest" description="Interaction with ZNF296" evidence="14">
    <location>
        <begin position="386"/>
        <end position="483"/>
    </location>
</feature>
<feature type="region of interest" description="Interaction with target DNA">
    <location>
        <begin position="443"/>
        <end position="474"/>
    </location>
</feature>
<feature type="short sequence motif" description="9aaTAD" evidence="2">
    <location>
        <begin position="99"/>
        <end position="107"/>
    </location>
</feature>
<feature type="compositionally biased region" description="Pro residues" evidence="4">
    <location>
        <begin position="338"/>
        <end position="356"/>
    </location>
</feature>
<feature type="compositionally biased region" description="Basic residues" evidence="4">
    <location>
        <begin position="386"/>
        <end position="395"/>
    </location>
</feature>
<feature type="modified residue" description="Phosphoserine" evidence="2">
    <location>
        <position position="251"/>
    </location>
</feature>
<feature type="modified residue" description="5-glutamyl polyglutamate" evidence="15">
    <location>
        <position position="381"/>
    </location>
</feature>
<feature type="cross-link" description="Glycyl lysine isopeptide (Lys-Gly) (interchain with G-Cter in ubiquitin)" evidence="2">
    <location>
        <position position="32"/>
    </location>
</feature>
<feature type="mutagenesis site" description="No change in KLF4 polyglutamylation." evidence="15">
    <original>E</original>
    <variation>A</variation>
    <location>
        <position position="46"/>
    </location>
</feature>
<feature type="mutagenesis site" description="No change in KLF4 polyglutamylation." evidence="15">
    <original>E</original>
    <variation>A</variation>
    <location>
        <position position="95"/>
    </location>
</feature>
<feature type="mutagenesis site" description="Increased cell reprogramming and pluripotency. No change in promoter-binding of target genes." evidence="15">
    <original>K</original>
    <variation>R</variation>
    <location>
        <position position="229"/>
    </location>
</feature>
<feature type="mutagenesis site" description="No change in KLF4 polyglutamylation." evidence="15">
    <original>E</original>
    <variation>A</variation>
    <location>
        <position position="326"/>
    </location>
</feature>
<feature type="mutagenesis site" description="Loss of polyglutamylation, reduced cell reprogramming and pluripotency maintenance. Forms heterodimer with KLF5. No change in promoter-binding of target genes. Embryo lethality in mutant homozygous mice." evidence="15">
    <original>E</original>
    <variation>A</variation>
    <location>
        <position position="381"/>
    </location>
</feature>
<feature type="sequence conflict" description="In Ref. 2; AAC52939." evidence="17" ref="2">
    <original>S</original>
    <variation>R</variation>
    <location>
        <position position="162"/>
    </location>
</feature>
<feature type="sequence conflict" description="In Ref. 2; AAC52939." evidence="17" ref="2">
    <original>A</original>
    <variation>G</variation>
    <location>
        <position position="185"/>
    </location>
</feature>
<feature type="sequence conflict" description="In Ref. 5; BAE33205." evidence="17" ref="5">
    <original>H</original>
    <variation>Q</variation>
    <location>
        <position position="302"/>
    </location>
</feature>
<feature type="sequence conflict" description="In Ref. 2; AAC52939." evidence="17" ref="2">
    <original>P</original>
    <variation>A</variation>
    <location>
        <position position="350"/>
    </location>
</feature>
<feature type="turn" evidence="18">
    <location>
        <begin position="405"/>
        <end position="407"/>
    </location>
</feature>
<feature type="strand" evidence="18">
    <location>
        <begin position="410"/>
        <end position="413"/>
    </location>
</feature>
<feature type="helix" evidence="18">
    <location>
        <begin position="414"/>
        <end position="421"/>
    </location>
</feature>
<feature type="turn" evidence="18">
    <location>
        <begin position="435"/>
        <end position="437"/>
    </location>
</feature>
<feature type="strand" evidence="18">
    <location>
        <begin position="440"/>
        <end position="443"/>
    </location>
</feature>
<feature type="helix" evidence="18">
    <location>
        <begin position="444"/>
        <end position="455"/>
    </location>
</feature>
<feature type="strand" evidence="18">
    <location>
        <begin position="463"/>
        <end position="466"/>
    </location>
</feature>
<feature type="strand" evidence="18">
    <location>
        <begin position="468"/>
        <end position="471"/>
    </location>
</feature>
<feature type="helix" evidence="18">
    <location>
        <begin position="472"/>
        <end position="478"/>
    </location>
</feature>
<feature type="helix" evidence="18">
    <location>
        <begin position="479"/>
        <end position="482"/>
    </location>
</feature>
<protein>
    <recommendedName>
        <fullName>Krueppel-like factor 4</fullName>
    </recommendedName>
    <alternativeName>
        <fullName>Epithelial zinc finger protein EZF</fullName>
    </alternativeName>
    <alternativeName>
        <fullName>Gut-enriched krueppel-like factor</fullName>
    </alternativeName>
</protein>
<proteinExistence type="evidence at protein level"/>
<reference key="1">
    <citation type="journal article" date="1996" name="J. Biol. Chem.">
        <title>Identification and characterization of a gene encoding a gut-enriched Kruppel-like factor expressed during growth arrest.</title>
        <authorList>
            <person name="Shields J.M."/>
            <person name="Christy R.J."/>
            <person name="Yang V.W."/>
        </authorList>
    </citation>
    <scope>NUCLEOTIDE SEQUENCE [MRNA]</scope>
</reference>
<reference key="2">
    <citation type="journal article" date="1996" name="J. Biol. Chem.">
        <title>A gene for a novel zinc-finger protein expressed in differentiated epithelial cells and transiently in certain mesenchymal cells.</title>
        <authorList>
            <person name="Garrett-Sinha L.A."/>
            <person name="Eberspaecher H."/>
            <person name="Seldin M.F."/>
            <person name="de Crombrugghe B."/>
        </authorList>
    </citation>
    <scope>NUCLEOTIDE SEQUENCE [MRNA]</scope>
    <source>
        <strain>C57BL/6 X DBA/2</strain>
        <tissue>Embryonic fibroblast</tissue>
    </source>
</reference>
<reference key="3">
    <citation type="journal article" date="1999" name="Nucleic Acids Res.">
        <title>Characterization of the structure and regulation of the murine gene encoding gut-enriched Kruppel-like factor (Kruppel-like factor 4).</title>
        <authorList>
            <person name="Mahatan C.S."/>
            <person name="Kaestner K.H."/>
            <person name="Geiman D.E."/>
            <person name="Yang V.W."/>
        </authorList>
    </citation>
    <scope>NUCLEOTIDE SEQUENCE [GENOMIC DNA]</scope>
    <scope>FUNCTION</scope>
    <source>
        <strain>129/SvJ</strain>
    </source>
</reference>
<reference key="4">
    <citation type="journal article" date="2002" name="Exp. Cell Res.">
        <title>STAT1 is required for IFN-gamma-mediated gut-enriched Kruppel-like factor expression.</title>
        <authorList>
            <person name="Chen Z.-Y."/>
            <person name="Shie J.-L."/>
            <person name="Tseng C.-C."/>
        </authorList>
    </citation>
    <scope>NUCLEOTIDE SEQUENCE [GENOMIC DNA]</scope>
    <scope>INDUCTION</scope>
    <source>
        <strain>C57BL/6J</strain>
    </source>
</reference>
<reference key="5">
    <citation type="journal article" date="2005" name="Science">
        <title>The transcriptional landscape of the mammalian genome.</title>
        <authorList>
            <person name="Carninci P."/>
            <person name="Kasukawa T."/>
            <person name="Katayama S."/>
            <person name="Gough J."/>
            <person name="Frith M.C."/>
            <person name="Maeda N."/>
            <person name="Oyama R."/>
            <person name="Ravasi T."/>
            <person name="Lenhard B."/>
            <person name="Wells C."/>
            <person name="Kodzius R."/>
            <person name="Shimokawa K."/>
            <person name="Bajic V.B."/>
            <person name="Brenner S.E."/>
            <person name="Batalov S."/>
            <person name="Forrest A.R."/>
            <person name="Zavolan M."/>
            <person name="Davis M.J."/>
            <person name="Wilming L.G."/>
            <person name="Aidinis V."/>
            <person name="Allen J.E."/>
            <person name="Ambesi-Impiombato A."/>
            <person name="Apweiler R."/>
            <person name="Aturaliya R.N."/>
            <person name="Bailey T.L."/>
            <person name="Bansal M."/>
            <person name="Baxter L."/>
            <person name="Beisel K.W."/>
            <person name="Bersano T."/>
            <person name="Bono H."/>
            <person name="Chalk A.M."/>
            <person name="Chiu K.P."/>
            <person name="Choudhary V."/>
            <person name="Christoffels A."/>
            <person name="Clutterbuck D.R."/>
            <person name="Crowe M.L."/>
            <person name="Dalla E."/>
            <person name="Dalrymple B.P."/>
            <person name="de Bono B."/>
            <person name="Della Gatta G."/>
            <person name="di Bernardo D."/>
            <person name="Down T."/>
            <person name="Engstrom P."/>
            <person name="Fagiolini M."/>
            <person name="Faulkner G."/>
            <person name="Fletcher C.F."/>
            <person name="Fukushima T."/>
            <person name="Furuno M."/>
            <person name="Futaki S."/>
            <person name="Gariboldi M."/>
            <person name="Georgii-Hemming P."/>
            <person name="Gingeras T.R."/>
            <person name="Gojobori T."/>
            <person name="Green R.E."/>
            <person name="Gustincich S."/>
            <person name="Harbers M."/>
            <person name="Hayashi Y."/>
            <person name="Hensch T.K."/>
            <person name="Hirokawa N."/>
            <person name="Hill D."/>
            <person name="Huminiecki L."/>
            <person name="Iacono M."/>
            <person name="Ikeo K."/>
            <person name="Iwama A."/>
            <person name="Ishikawa T."/>
            <person name="Jakt M."/>
            <person name="Kanapin A."/>
            <person name="Katoh M."/>
            <person name="Kawasawa Y."/>
            <person name="Kelso J."/>
            <person name="Kitamura H."/>
            <person name="Kitano H."/>
            <person name="Kollias G."/>
            <person name="Krishnan S.P."/>
            <person name="Kruger A."/>
            <person name="Kummerfeld S.K."/>
            <person name="Kurochkin I.V."/>
            <person name="Lareau L.F."/>
            <person name="Lazarevic D."/>
            <person name="Lipovich L."/>
            <person name="Liu J."/>
            <person name="Liuni S."/>
            <person name="McWilliam S."/>
            <person name="Madan Babu M."/>
            <person name="Madera M."/>
            <person name="Marchionni L."/>
            <person name="Matsuda H."/>
            <person name="Matsuzawa S."/>
            <person name="Miki H."/>
            <person name="Mignone F."/>
            <person name="Miyake S."/>
            <person name="Morris K."/>
            <person name="Mottagui-Tabar S."/>
            <person name="Mulder N."/>
            <person name="Nakano N."/>
            <person name="Nakauchi H."/>
            <person name="Ng P."/>
            <person name="Nilsson R."/>
            <person name="Nishiguchi S."/>
            <person name="Nishikawa S."/>
            <person name="Nori F."/>
            <person name="Ohara O."/>
            <person name="Okazaki Y."/>
            <person name="Orlando V."/>
            <person name="Pang K.C."/>
            <person name="Pavan W.J."/>
            <person name="Pavesi G."/>
            <person name="Pesole G."/>
            <person name="Petrovsky N."/>
            <person name="Piazza S."/>
            <person name="Reed J."/>
            <person name="Reid J.F."/>
            <person name="Ring B.Z."/>
            <person name="Ringwald M."/>
            <person name="Rost B."/>
            <person name="Ruan Y."/>
            <person name="Salzberg S.L."/>
            <person name="Sandelin A."/>
            <person name="Schneider C."/>
            <person name="Schoenbach C."/>
            <person name="Sekiguchi K."/>
            <person name="Semple C.A."/>
            <person name="Seno S."/>
            <person name="Sessa L."/>
            <person name="Sheng Y."/>
            <person name="Shibata Y."/>
            <person name="Shimada H."/>
            <person name="Shimada K."/>
            <person name="Silva D."/>
            <person name="Sinclair B."/>
            <person name="Sperling S."/>
            <person name="Stupka E."/>
            <person name="Sugiura K."/>
            <person name="Sultana R."/>
            <person name="Takenaka Y."/>
            <person name="Taki K."/>
            <person name="Tammoja K."/>
            <person name="Tan S.L."/>
            <person name="Tang S."/>
            <person name="Taylor M.S."/>
            <person name="Tegner J."/>
            <person name="Teichmann S.A."/>
            <person name="Ueda H.R."/>
            <person name="van Nimwegen E."/>
            <person name="Verardo R."/>
            <person name="Wei C.L."/>
            <person name="Yagi K."/>
            <person name="Yamanishi H."/>
            <person name="Zabarovsky E."/>
            <person name="Zhu S."/>
            <person name="Zimmer A."/>
            <person name="Hide W."/>
            <person name="Bult C."/>
            <person name="Grimmond S.M."/>
            <person name="Teasdale R.D."/>
            <person name="Liu E.T."/>
            <person name="Brusic V."/>
            <person name="Quackenbush J."/>
            <person name="Wahlestedt C."/>
            <person name="Mattick J.S."/>
            <person name="Hume D.A."/>
            <person name="Kai C."/>
            <person name="Sasaki D."/>
            <person name="Tomaru Y."/>
            <person name="Fukuda S."/>
            <person name="Kanamori-Katayama M."/>
            <person name="Suzuki M."/>
            <person name="Aoki J."/>
            <person name="Arakawa T."/>
            <person name="Iida J."/>
            <person name="Imamura K."/>
            <person name="Itoh M."/>
            <person name="Kato T."/>
            <person name="Kawaji H."/>
            <person name="Kawagashira N."/>
            <person name="Kawashima T."/>
            <person name="Kojima M."/>
            <person name="Kondo S."/>
            <person name="Konno H."/>
            <person name="Nakano K."/>
            <person name="Ninomiya N."/>
            <person name="Nishio T."/>
            <person name="Okada M."/>
            <person name="Plessy C."/>
            <person name="Shibata K."/>
            <person name="Shiraki T."/>
            <person name="Suzuki S."/>
            <person name="Tagami M."/>
            <person name="Waki K."/>
            <person name="Watahiki A."/>
            <person name="Okamura-Oho Y."/>
            <person name="Suzuki H."/>
            <person name="Kawai J."/>
            <person name="Hayashizaki Y."/>
        </authorList>
    </citation>
    <scope>NUCLEOTIDE SEQUENCE [LARGE SCALE MRNA]</scope>
    <source>
        <strain>C57BL/6J</strain>
        <strain>NOD</strain>
        <tissue>Dendritic cell</tissue>
        <tissue>Embryonic stem cell</tissue>
        <tissue>Mammary gland</tissue>
    </source>
</reference>
<reference key="6">
    <citation type="journal article" date="2009" name="PLoS Biol.">
        <title>Lineage-specific biology revealed by a finished genome assembly of the mouse.</title>
        <authorList>
            <person name="Church D.M."/>
            <person name="Goodstadt L."/>
            <person name="Hillier L.W."/>
            <person name="Zody M.C."/>
            <person name="Goldstein S."/>
            <person name="She X."/>
            <person name="Bult C.J."/>
            <person name="Agarwala R."/>
            <person name="Cherry J.L."/>
            <person name="DiCuccio M."/>
            <person name="Hlavina W."/>
            <person name="Kapustin Y."/>
            <person name="Meric P."/>
            <person name="Maglott D."/>
            <person name="Birtle Z."/>
            <person name="Marques A.C."/>
            <person name="Graves T."/>
            <person name="Zhou S."/>
            <person name="Teague B."/>
            <person name="Potamousis K."/>
            <person name="Churas C."/>
            <person name="Place M."/>
            <person name="Herschleb J."/>
            <person name="Runnheim R."/>
            <person name="Forrest D."/>
            <person name="Amos-Landgraf J."/>
            <person name="Schwartz D.C."/>
            <person name="Cheng Z."/>
            <person name="Lindblad-Toh K."/>
            <person name="Eichler E.E."/>
            <person name="Ponting C.P."/>
        </authorList>
    </citation>
    <scope>NUCLEOTIDE SEQUENCE [LARGE SCALE GENOMIC DNA]</scope>
    <source>
        <strain>C57BL/6J</strain>
    </source>
</reference>
<reference key="7">
    <citation type="submission" date="2005-09" db="EMBL/GenBank/DDBJ databases">
        <authorList>
            <person name="Mural R.J."/>
            <person name="Adams M.D."/>
            <person name="Myers E.W."/>
            <person name="Smith H.O."/>
            <person name="Venter J.C."/>
        </authorList>
    </citation>
    <scope>NUCLEOTIDE SEQUENCE [LARGE SCALE GENOMIC DNA]</scope>
</reference>
<reference key="8">
    <citation type="journal article" date="2004" name="Genome Res.">
        <title>The status, quality, and expansion of the NIH full-length cDNA project: the Mammalian Gene Collection (MGC).</title>
        <authorList>
            <consortium name="The MGC Project Team"/>
        </authorList>
    </citation>
    <scope>NUCLEOTIDE SEQUENCE [LARGE SCALE MRNA]</scope>
    <source>
        <strain>FVB/N</strain>
        <tissue>Mammary tumor</tissue>
    </source>
</reference>
<reference key="9">
    <citation type="journal article" date="1999" name="Nat. Genet.">
        <title>Klf4 is a transcription factor required for establishing the barrier function of the skin.</title>
        <authorList>
            <person name="Segre J.A."/>
            <person name="Bauer C."/>
            <person name="Fuchs E."/>
        </authorList>
    </citation>
    <scope>FUNCTION</scope>
    <scope>SUBCELLULAR LOCATION</scope>
    <scope>DISRUPTION PHENOTYPE</scope>
</reference>
<reference key="10">
    <citation type="journal article" date="2005" name="Blood">
        <title>Murine embryonic stem cell differentiation is promoted by SOCS-3 and inhibited by the zinc finger transcription factor Klf4.</title>
        <authorList>
            <person name="Li Y."/>
            <person name="McClintick J."/>
            <person name="Zhong L."/>
            <person name="Edenberg H.J."/>
            <person name="Yoder M.C."/>
            <person name="Chan R.J."/>
        </authorList>
    </citation>
    <scope>FUNCTION</scope>
</reference>
<reference key="11">
    <citation type="journal article" date="2006" name="Cell">
        <title>Induction of pluripotent stem cells from mouse embryonic and adult fibroblast cultures by defined factors.</title>
        <authorList>
            <person name="Takahashi K."/>
            <person name="Yamanaka S."/>
        </authorList>
    </citation>
    <scope>BIOTECHNOLOGY</scope>
</reference>
<reference key="12">
    <citation type="journal article" date="2006" name="Mol. Cell. Biol.">
        <title>Klf4 cooperates with Oct3/4 and Sox2 to activate the Lefty1 core promoter in embryonic stem cells.</title>
        <authorList>
            <person name="Nakatake Y."/>
            <person name="Fukui N."/>
            <person name="Iwamatsu Y."/>
            <person name="Masui S."/>
            <person name="Takahashi K."/>
            <person name="Yagi R."/>
            <person name="Yagi K."/>
            <person name="Miyazaki J."/>
            <person name="Matoba R."/>
            <person name="Ko M.S."/>
            <person name="Niwa H."/>
        </authorList>
    </citation>
    <scope>FUNCTION</scope>
</reference>
<reference key="13">
    <citation type="journal article" date="2007" name="Mol. Cell. Biol.">
        <title>Conditional deletion of the mouse Klf4 gene results in corneal epithelial fragility, stromal edema, and loss of conjunctival goblet cells.</title>
        <authorList>
            <person name="Swamynathan S.K."/>
            <person name="Katz J.P."/>
            <person name="Kaestner K.H."/>
            <person name="Ashery-Padan R."/>
            <person name="Crawford M.A."/>
            <person name="Piatigorsky J."/>
        </authorList>
    </citation>
    <scope>FUNCTION</scope>
    <scope>DISRUPTION PHENOTYPE</scope>
</reference>
<reference key="14">
    <citation type="journal article" date="2009" name="Stem Cells">
        <title>Klf4 interacts directly with Oct4 and Sox2 to promote reprogramming.</title>
        <authorList>
            <person name="Wei Z."/>
            <person name="Yang Y."/>
            <person name="Zhang P."/>
            <person name="Andrianakos R."/>
            <person name="Hasegawa K."/>
            <person name="Lyu J."/>
            <person name="Chen X."/>
            <person name="Bai G."/>
            <person name="Liu C."/>
            <person name="Pera M."/>
            <person name="Lu W."/>
        </authorList>
    </citation>
    <scope>FUNCTION</scope>
    <scope>INTERACTION WITH POU5F1/OCT4 AND SOX2</scope>
    <scope>BIOTECHNOLOGY</scope>
</reference>
<reference key="15">
    <citation type="journal article" date="2010" name="Cell">
        <title>A tissue-specific atlas of mouse protein phosphorylation and expression.</title>
        <authorList>
            <person name="Huttlin E.L."/>
            <person name="Jedrychowski M.P."/>
            <person name="Elias J.E."/>
            <person name="Goswami T."/>
            <person name="Rad R."/>
            <person name="Beausoleil S.A."/>
            <person name="Villen J."/>
            <person name="Haas W."/>
            <person name="Sowa M.E."/>
            <person name="Gygi S.P."/>
        </authorList>
    </citation>
    <scope>IDENTIFICATION BY MASS SPECTROMETRY [LARGE SCALE ANALYSIS]</scope>
    <source>
        <tissue>Kidney</tissue>
        <tissue>Lung</tissue>
    </source>
</reference>
<reference key="16">
    <citation type="journal article" date="2010" name="J. Biol. Chem.">
        <title>Kruppel-like factor 4 (Klf4) prevents embryonic stem (ES) cell differentiation by regulating Nanog gene expression.</title>
        <authorList>
            <person name="Zhang P."/>
            <person name="Andrianakos R."/>
            <person name="Yang Y."/>
            <person name="Liu C."/>
            <person name="Lu W."/>
        </authorList>
    </citation>
    <scope>FUNCTION</scope>
</reference>
<reference key="17">
    <citation type="journal article" date="2013" name="Biochem. Biophys. Res. Commun.">
        <title>Zfp296 is a novel Klf4-interacting protein and functions as a negative regulator.</title>
        <authorList>
            <person name="Fujii Y."/>
            <person name="Kakegawa M."/>
            <person name="Koide H."/>
            <person name="Akagi T."/>
            <person name="Yokota T."/>
        </authorList>
    </citation>
    <scope>INTERACTION WITH ZNF296</scope>
    <scope>SUBCELLULAR LOCATION</scope>
</reference>
<reference key="18">
    <citation type="journal article" date="2018" name="Nat. Commun.">
        <title>Klf4 glutamylation is required for cell reprogramming and early embryonic development in mice.</title>
        <authorList>
            <person name="Ye B."/>
            <person name="Liu B."/>
            <person name="Hao L."/>
            <person name="Zhu X."/>
            <person name="Yang L."/>
            <person name="Wang S."/>
            <person name="Xia P."/>
            <person name="Du Y."/>
            <person name="Meng S."/>
            <person name="Huang G."/>
            <person name="Qin X."/>
            <person name="Wang Y."/>
            <person name="Yan X."/>
            <person name="Li C."/>
            <person name="Hao J."/>
            <person name="Zhu P."/>
            <person name="He L."/>
            <person name="Tian Y."/>
            <person name="Fan Z."/>
        </authorList>
    </citation>
    <scope>FUNCTION</scope>
    <scope>INTERACTION WITH BTRC</scope>
    <scope>GLUTAMYLATION AT GLU-381</scope>
    <scope>UBIQUITINATION</scope>
    <scope>MUTAGENESIS OF GLU-46; GLU-95; LYS-229; GLU-326 AND GLU-381</scope>
</reference>
<reference key="19">
    <citation type="journal article" date="2022" name="Stem Cells">
        <title>IPO7 Promotes Odontoblastic Differentiation and Inhibits Osteoblastic Differentiation Through Regulation of RUNX2 Expression and Translocation.</title>
        <authorList>
            <person name="Zhang Y."/>
            <person name="Zhang H."/>
            <person name="Xiao Z."/>
            <person name="Yuan G."/>
            <person name="Yang G."/>
        </authorList>
    </citation>
    <scope>INTERACTION WITH IPO7</scope>
    <scope>SUBCELLULAR LOCATION</scope>
</reference>
<reference key="20">
    <citation type="submission" date="2010-04" db="PDB data bank">
        <title>Crystal structure in complex with DNA.</title>
        <authorList>
            <person name="Schuetz A."/>
            <person name="Zocher G."/>
            <person name="Carstanjen D."/>
            <person name="Heinemann U."/>
        </authorList>
    </citation>
    <scope>X-RAY CRYSTALLOGRAPHY (1.7 ANGSTROMS) OF 395-483 IN COMPLEX WITH ZINC IONS AND DNA</scope>
</reference>
<organism>
    <name type="scientific">Mus musculus</name>
    <name type="common">Mouse</name>
    <dbReference type="NCBI Taxonomy" id="10090"/>
    <lineage>
        <taxon>Eukaryota</taxon>
        <taxon>Metazoa</taxon>
        <taxon>Chordata</taxon>
        <taxon>Craniata</taxon>
        <taxon>Vertebrata</taxon>
        <taxon>Euteleostomi</taxon>
        <taxon>Mammalia</taxon>
        <taxon>Eutheria</taxon>
        <taxon>Euarchontoglires</taxon>
        <taxon>Glires</taxon>
        <taxon>Rodentia</taxon>
        <taxon>Myomorpha</taxon>
        <taxon>Muroidea</taxon>
        <taxon>Muridae</taxon>
        <taxon>Murinae</taxon>
        <taxon>Mus</taxon>
        <taxon>Mus</taxon>
    </lineage>
</organism>
<name>KLF4_MOUSE</name>
<sequence>MRQPPGESDMAVSDALLPSFSTFASGPAGREKTLRPAGAPTNRWREELSHMKRLPPLPGRPYDLAATVATDLESGGAGAACSSNNPALLARRETEEFNDLLDLDFILSNSLTHQESVAATVTTSASASSSSSPASSGPASAPSTCSFSYPIRAGGDPGVAASNTGGGLLYSRESAPPPTAPFNLADINDVSPSGGFVAELLRPELDPVYIPPQQPQPPGGGLMGKFVLKASLTTPGSEYSSPSVISVSKGSPDGSHPVVVAPYSGGPPRMCPKIKQEAVPSCTVSRSLEAHLSAGPQLSNGHRPNTHDFPLGRQLPTRTTPTLSPEELLNSRDCHPGLPLPPGFHPHPGPNYPPFLPDQMQSQVPSLHYQELMPPGSCLPEEPKPKRGRRSWPRKRTATHTCDYAGCGKTYTKSSHLKAHLRTHTGEKPYHCDWDGCGWKFARSDELTRHYRKHTGHRPFQCQKCDRAFSRSDHLALHMKRHF</sequence>
<gene>
    <name type="primary">Klf4</name>
    <name type="synonym">Ezf</name>
    <name type="synonym">Gklf</name>
    <name type="synonym">Zie</name>
</gene>
<keyword id="KW-0002">3D-structure</keyword>
<keyword id="KW-0010">Activator</keyword>
<keyword id="KW-0963">Cytoplasm</keyword>
<keyword id="KW-0238">DNA-binding</keyword>
<keyword id="KW-1017">Isopeptide bond</keyword>
<keyword id="KW-0479">Metal-binding</keyword>
<keyword id="KW-0539">Nucleus</keyword>
<keyword id="KW-0597">Phosphoprotein</keyword>
<keyword id="KW-1185">Reference proteome</keyword>
<keyword id="KW-0677">Repeat</keyword>
<keyword id="KW-0804">Transcription</keyword>
<keyword id="KW-0805">Transcription regulation</keyword>
<keyword id="KW-0832">Ubl conjugation</keyword>
<keyword id="KW-0862">Zinc</keyword>
<keyword id="KW-0863">Zinc-finger</keyword>